<evidence type="ECO:0000250" key="1"/>
<evidence type="ECO:0000250" key="2">
    <source>
        <dbReference type="UniProtKB" id="Q8NE71"/>
    </source>
</evidence>
<evidence type="ECO:0000255" key="3">
    <source>
        <dbReference type="PROSITE-ProRule" id="PRU00434"/>
    </source>
</evidence>
<evidence type="ECO:0000256" key="4">
    <source>
        <dbReference type="SAM" id="MobiDB-lite"/>
    </source>
</evidence>
<evidence type="ECO:0000305" key="5"/>
<comment type="function">
    <text evidence="1">Required for efficient Cap- and IRES-mediated mRNA translation initiation. Not involved in the ribosome biogenesis (By similarity).</text>
</comment>
<comment type="subunit">
    <text evidence="1">Interacts (via N-terminus) with EIF2S1; the interaction is independent of its phosphorylated status. Associates (via both ABC transporter domains) with the ribosomes (By similarity).</text>
</comment>
<comment type="subcellular location">
    <subcellularLocation>
        <location evidence="2">Cytoplasm</location>
    </subcellularLocation>
    <subcellularLocation>
        <location evidence="2">Nucleus</location>
        <location evidence="2">Nucleoplasm</location>
    </subcellularLocation>
    <subcellularLocation>
        <location evidence="2">Nucleus envelope</location>
    </subcellularLocation>
</comment>
<comment type="PTM">
    <text evidence="1">Phosphorylated at phosphoserine and phosphothreonine. Phosphorylation on Ser-110 and Ser-141 by CK2; inhibits association of EIF2 with ribosomes (By similarity).</text>
</comment>
<comment type="similarity">
    <text evidence="5">Belongs to the ABC transporter superfamily. ABCF family. EF3 subfamily.</text>
</comment>
<proteinExistence type="inferred from homology"/>
<sequence>MPKGPKQQPPEPEWIGDGESTSPTDKVVKKGKKDKKTKKTFFEELAVEDRQAGEEEKVLKEKEQQQQHQQQQQKKKRDTRKGRRKKDVDDDDGEEKELMERLKKLSVPASDEEEEAPAPVPRGGKKNKGGNVFAALIQDQSEEEEEEEKHPPKPAKPEKNRINKAVSQEQQPGPKGRKGKEEKSKGKAKPQNKFAALDDEEEQDEEEIKEKEPPKQGKEKAKKAEQMEYERQVASLKAANAAENDFSVSQAEMSSRQAMLENASDIKLEKFSISAHGKELFVNADLYIVAGRRYGLVGPNGKGKTTLLKHIANRALSIPPNIDVLLCEQEVVADETPAVQAVLRADTKRLKLLEEERRLQGQLEQGDDTAADRLEKVYEELRATGAAAAEAKARRILAGLGFDPEMQNRPTQKFSGGWRMRVSLARALFMEPTLLMLDEPTNHLDLNAVIWLNNYLQGWRKTLLIVSHDQGFLDDVCTDIIHLDAQRLHYYRGNYMTFKKMYQQKQKELLKQYEKQEKKLKELKAGGKSTKQAEKQTKEALTRKQQKCRRKNQDEESQEAPELLKRPKEYTVRFTFPDPPPLSPPVLGLHGVTFGYEGQKPLFKNLDFGIDMDSRICIVGPNGVGKSTLLLLLTGKLTPTRGEMRKNHRLKIGFFNQQYAEQLRMEETPTEYLQRGFNLPYQDARKCLGRFGLESHAHTIQICKLSGGQKARVVFAELACREPDVLILDEPTNNLDIESIDALGEAINEYKGAVIVVSHDARLITETNCQLWVVEEQSVSQIDGDFDDYKREVLEALGEVMVSRPRE</sequence>
<protein>
    <recommendedName>
        <fullName>ATP-binding cassette sub-family F member 1</fullName>
    </recommendedName>
</protein>
<accession>Q767L0</accession>
<dbReference type="EMBL" id="AB113357">
    <property type="protein sequence ID" value="BAD08439.1"/>
    <property type="molecule type" value="Genomic_DNA"/>
</dbReference>
<dbReference type="RefSeq" id="NP_001116541.1">
    <property type="nucleotide sequence ID" value="NM_001123069.1"/>
</dbReference>
<dbReference type="SMR" id="Q767L0"/>
<dbReference type="FunCoup" id="Q767L0">
    <property type="interactions" value="2730"/>
</dbReference>
<dbReference type="STRING" id="9823.ENSSSCP00000028530"/>
<dbReference type="PaxDb" id="9823-ENSSSCP00000001420"/>
<dbReference type="PeptideAtlas" id="Q767L0"/>
<dbReference type="Ensembl" id="ENSSSCT00000093294.2">
    <property type="protein sequence ID" value="ENSSSCP00000075583.1"/>
    <property type="gene ID" value="ENSSSCG00000001346.7"/>
</dbReference>
<dbReference type="Ensembl" id="ENSSSCT00015047857.1">
    <property type="protein sequence ID" value="ENSSSCP00015018968.1"/>
    <property type="gene ID" value="ENSSSCG00015034086.1"/>
</dbReference>
<dbReference type="Ensembl" id="ENSSSCT00030086951.1">
    <property type="protein sequence ID" value="ENSSSCP00030040123.1"/>
    <property type="gene ID" value="ENSSSCG00030061982.1"/>
</dbReference>
<dbReference type="Ensembl" id="ENSSSCT00035087430.1">
    <property type="protein sequence ID" value="ENSSSCP00035036503.1"/>
    <property type="gene ID" value="ENSSSCG00035064746.1"/>
</dbReference>
<dbReference type="Ensembl" id="ENSSSCT00040098572.1">
    <property type="protein sequence ID" value="ENSSSCP00040044051.1"/>
    <property type="gene ID" value="ENSSSCG00040071140.1"/>
</dbReference>
<dbReference type="Ensembl" id="ENSSSCT00045068613.1">
    <property type="protein sequence ID" value="ENSSSCP00045048833.1"/>
    <property type="gene ID" value="ENSSSCG00045039380.1"/>
</dbReference>
<dbReference type="Ensembl" id="ENSSSCT00055061136.1">
    <property type="protein sequence ID" value="ENSSSCP00055049024.1"/>
    <property type="gene ID" value="ENSSSCG00055030656.1"/>
</dbReference>
<dbReference type="Ensembl" id="ENSSSCT00065084428.1">
    <property type="protein sequence ID" value="ENSSSCP00065036820.1"/>
    <property type="gene ID" value="ENSSSCG00065061355.1"/>
</dbReference>
<dbReference type="Ensembl" id="ENSSSCT00070049248.1">
    <property type="protein sequence ID" value="ENSSSCP00070041599.1"/>
    <property type="gene ID" value="ENSSSCG00070024670.1"/>
</dbReference>
<dbReference type="Ensembl" id="ENSSSCT00085022554">
    <property type="protein sequence ID" value="ENSSSCP00085015572"/>
    <property type="gene ID" value="ENSSSCG00085011990"/>
</dbReference>
<dbReference type="Ensembl" id="ENSSSCT00105033483">
    <property type="protein sequence ID" value="ENSSSCP00105023367"/>
    <property type="gene ID" value="ENSSSCG00105017374"/>
</dbReference>
<dbReference type="Ensembl" id="ENSSSCT00110039779">
    <property type="protein sequence ID" value="ENSSSCP00110027618"/>
    <property type="gene ID" value="ENSSSCG00110020545"/>
</dbReference>
<dbReference type="Ensembl" id="ENSSSCT00115015967">
    <property type="protein sequence ID" value="ENSSSCP00115015064"/>
    <property type="gene ID" value="ENSSSCG00115008775"/>
</dbReference>
<dbReference type="GeneID" id="100144452"/>
<dbReference type="KEGG" id="ssc:100144452"/>
<dbReference type="CTD" id="23"/>
<dbReference type="VGNC" id="VGNC:84966">
    <property type="gene designation" value="ABCF1"/>
</dbReference>
<dbReference type="eggNOG" id="KOG0066">
    <property type="taxonomic scope" value="Eukaryota"/>
</dbReference>
<dbReference type="GeneTree" id="ENSGT00940000158329"/>
<dbReference type="HOGENOM" id="CLU_000604_36_5_1"/>
<dbReference type="InParanoid" id="Q767L0"/>
<dbReference type="OMA" id="ARLVLCM"/>
<dbReference type="OrthoDB" id="2110130at2759"/>
<dbReference type="TreeFam" id="TF105207"/>
<dbReference type="Reactome" id="R-SSC-382556">
    <property type="pathway name" value="ABC-family proteins mediated transport"/>
</dbReference>
<dbReference type="Proteomes" id="UP000008227">
    <property type="component" value="Chromosome 7"/>
</dbReference>
<dbReference type="Proteomes" id="UP000314985">
    <property type="component" value="Chromosome 7"/>
</dbReference>
<dbReference type="Proteomes" id="UP000694570">
    <property type="component" value="Unplaced"/>
</dbReference>
<dbReference type="Proteomes" id="UP000694571">
    <property type="component" value="Unplaced"/>
</dbReference>
<dbReference type="Proteomes" id="UP000694720">
    <property type="component" value="Unplaced"/>
</dbReference>
<dbReference type="Proteomes" id="UP000694722">
    <property type="component" value="Unplaced"/>
</dbReference>
<dbReference type="Proteomes" id="UP000694723">
    <property type="component" value="Unplaced"/>
</dbReference>
<dbReference type="Proteomes" id="UP000694724">
    <property type="component" value="Unplaced"/>
</dbReference>
<dbReference type="Proteomes" id="UP000694725">
    <property type="component" value="Unplaced"/>
</dbReference>
<dbReference type="Proteomes" id="UP000694726">
    <property type="component" value="Unplaced"/>
</dbReference>
<dbReference type="Proteomes" id="UP000694727">
    <property type="component" value="Unplaced"/>
</dbReference>
<dbReference type="Proteomes" id="UP000694728">
    <property type="component" value="Unplaced"/>
</dbReference>
<dbReference type="GO" id="GO:0005737">
    <property type="term" value="C:cytoplasm"/>
    <property type="evidence" value="ECO:0000250"/>
    <property type="project" value="UniProtKB"/>
</dbReference>
<dbReference type="GO" id="GO:0005635">
    <property type="term" value="C:nuclear envelope"/>
    <property type="evidence" value="ECO:0000250"/>
    <property type="project" value="UniProtKB"/>
</dbReference>
<dbReference type="GO" id="GO:0005654">
    <property type="term" value="C:nucleoplasm"/>
    <property type="evidence" value="ECO:0000250"/>
    <property type="project" value="UniProtKB"/>
</dbReference>
<dbReference type="GO" id="GO:0005524">
    <property type="term" value="F:ATP binding"/>
    <property type="evidence" value="ECO:0000250"/>
    <property type="project" value="UniProtKB"/>
</dbReference>
<dbReference type="GO" id="GO:0016887">
    <property type="term" value="F:ATP hydrolysis activity"/>
    <property type="evidence" value="ECO:0007669"/>
    <property type="project" value="InterPro"/>
</dbReference>
<dbReference type="GO" id="GO:0043022">
    <property type="term" value="F:ribosome binding"/>
    <property type="evidence" value="ECO:0000250"/>
    <property type="project" value="UniProtKB"/>
</dbReference>
<dbReference type="GO" id="GO:0008494">
    <property type="term" value="F:translation activator activity"/>
    <property type="evidence" value="ECO:0000250"/>
    <property type="project" value="UniProtKB"/>
</dbReference>
<dbReference type="GO" id="GO:0045727">
    <property type="term" value="P:positive regulation of translation"/>
    <property type="evidence" value="ECO:0000250"/>
    <property type="project" value="UniProtKB"/>
</dbReference>
<dbReference type="GO" id="GO:0006413">
    <property type="term" value="P:translational initiation"/>
    <property type="evidence" value="ECO:0000250"/>
    <property type="project" value="UniProtKB"/>
</dbReference>
<dbReference type="CDD" id="cd03221">
    <property type="entry name" value="ABCF_EF-3"/>
    <property type="match status" value="2"/>
</dbReference>
<dbReference type="FunFam" id="3.40.50.300:FF:000471">
    <property type="entry name" value="ATP-binding cassette, sub-family F (GCN20), member 1"/>
    <property type="match status" value="1"/>
</dbReference>
<dbReference type="FunFam" id="3.40.50.300:FF:000472">
    <property type="entry name" value="ATP-binding cassette, sub-family F (GCN20), member 1"/>
    <property type="match status" value="1"/>
</dbReference>
<dbReference type="Gene3D" id="3.40.50.300">
    <property type="entry name" value="P-loop containing nucleotide triphosphate hydrolases"/>
    <property type="match status" value="2"/>
</dbReference>
<dbReference type="InterPro" id="IPR003593">
    <property type="entry name" value="AAA+_ATPase"/>
</dbReference>
<dbReference type="InterPro" id="IPR003439">
    <property type="entry name" value="ABC_transporter-like_ATP-bd"/>
</dbReference>
<dbReference type="InterPro" id="IPR017871">
    <property type="entry name" value="ABC_transporter-like_CS"/>
</dbReference>
<dbReference type="InterPro" id="IPR050611">
    <property type="entry name" value="ABCF_EF3_subfamily"/>
</dbReference>
<dbReference type="InterPro" id="IPR027417">
    <property type="entry name" value="P-loop_NTPase"/>
</dbReference>
<dbReference type="NCBIfam" id="NF000355">
    <property type="entry name" value="ribo_prot_ABC_F"/>
    <property type="match status" value="1"/>
</dbReference>
<dbReference type="PANTHER" id="PTHR19211:SF126">
    <property type="entry name" value="ATP-BINDING CASSETTE SUB-FAMILY F MEMBER 1"/>
    <property type="match status" value="1"/>
</dbReference>
<dbReference type="PANTHER" id="PTHR19211">
    <property type="entry name" value="ATP-BINDING TRANSPORT PROTEIN-RELATED"/>
    <property type="match status" value="1"/>
</dbReference>
<dbReference type="Pfam" id="PF00005">
    <property type="entry name" value="ABC_tran"/>
    <property type="match status" value="2"/>
</dbReference>
<dbReference type="SMART" id="SM00382">
    <property type="entry name" value="AAA"/>
    <property type="match status" value="2"/>
</dbReference>
<dbReference type="SUPFAM" id="SSF52540">
    <property type="entry name" value="P-loop containing nucleoside triphosphate hydrolases"/>
    <property type="match status" value="2"/>
</dbReference>
<dbReference type="PROSITE" id="PS00211">
    <property type="entry name" value="ABC_TRANSPORTER_1"/>
    <property type="match status" value="2"/>
</dbReference>
<dbReference type="PROSITE" id="PS50893">
    <property type="entry name" value="ABC_TRANSPORTER_2"/>
    <property type="match status" value="2"/>
</dbReference>
<reference key="1">
    <citation type="journal article" date="2004" name="Immunogenetics">
        <title>Nucleotide sequencing analysis of the swine 433-kb genomic segment located between the non-classical and classical SLA class I gene clusters.</title>
        <authorList>
            <person name="Shigenari A."/>
            <person name="Ando A."/>
            <person name="Renard C."/>
            <person name="Chardon P."/>
            <person name="Shiina T."/>
            <person name="Kulski J.K."/>
            <person name="Yasue H."/>
            <person name="Inoko H."/>
        </authorList>
    </citation>
    <scope>NUCLEOTIDE SEQUENCE [LARGE SCALE GENOMIC DNA]</scope>
    <source>
        <strain>Large white</strain>
    </source>
</reference>
<gene>
    <name type="primary">ABCF1</name>
</gene>
<name>ABCF1_PIG</name>
<feature type="chain" id="PRO_0000093321" description="ATP-binding cassette sub-family F member 1">
    <location>
        <begin position="1"/>
        <end position="807"/>
    </location>
</feature>
<feature type="domain" description="ABC transporter 1" evidence="3">
    <location>
        <begin position="266"/>
        <end position="510"/>
    </location>
</feature>
<feature type="domain" description="ABC transporter 2" evidence="3">
    <location>
        <begin position="587"/>
        <end position="802"/>
    </location>
</feature>
<feature type="region of interest" description="Disordered" evidence="4">
    <location>
        <begin position="1"/>
        <end position="227"/>
    </location>
</feature>
<feature type="region of interest" description="Disordered" evidence="4">
    <location>
        <begin position="521"/>
        <end position="564"/>
    </location>
</feature>
<feature type="compositionally biased region" description="Basic residues" evidence="4">
    <location>
        <begin position="29"/>
        <end position="39"/>
    </location>
</feature>
<feature type="compositionally biased region" description="Basic and acidic residues" evidence="4">
    <location>
        <begin position="47"/>
        <end position="65"/>
    </location>
</feature>
<feature type="compositionally biased region" description="Basic residues" evidence="4">
    <location>
        <begin position="73"/>
        <end position="85"/>
    </location>
</feature>
<feature type="compositionally biased region" description="Basic and acidic residues" evidence="4">
    <location>
        <begin position="148"/>
        <end position="161"/>
    </location>
</feature>
<feature type="compositionally biased region" description="Acidic residues" evidence="4">
    <location>
        <begin position="197"/>
        <end position="207"/>
    </location>
</feature>
<feature type="compositionally biased region" description="Basic and acidic residues" evidence="4">
    <location>
        <begin position="208"/>
        <end position="227"/>
    </location>
</feature>
<feature type="compositionally biased region" description="Basic and acidic residues" evidence="4">
    <location>
        <begin position="521"/>
        <end position="542"/>
    </location>
</feature>
<feature type="binding site" evidence="3">
    <location>
        <begin position="298"/>
        <end position="305"/>
    </location>
    <ligand>
        <name>ATP</name>
        <dbReference type="ChEBI" id="CHEBI:30616"/>
        <label>1</label>
    </ligand>
</feature>
<feature type="binding site" evidence="3">
    <location>
        <begin position="620"/>
        <end position="627"/>
    </location>
    <ligand>
        <name>ATP</name>
        <dbReference type="ChEBI" id="CHEBI:30616"/>
        <label>2</label>
    </ligand>
</feature>
<feature type="modified residue" description="Phosphoserine" evidence="2">
    <location>
        <position position="22"/>
    </location>
</feature>
<feature type="modified residue" description="Phosphoserine" evidence="2">
    <location>
        <position position="106"/>
    </location>
</feature>
<feature type="modified residue" description="Phosphoserine; by CK2" evidence="2">
    <location>
        <position position="110"/>
    </location>
</feature>
<feature type="modified residue" description="Phosphoserine; by CK2" evidence="2">
    <location>
        <position position="141"/>
    </location>
</feature>
<feature type="modified residue" description="Phosphoserine" evidence="2">
    <location>
        <position position="167"/>
    </location>
</feature>
<feature type="modified residue" description="Phosphoserine" evidence="2">
    <location>
        <position position="557"/>
    </location>
</feature>
<keyword id="KW-0010">Activator</keyword>
<keyword id="KW-0067">ATP-binding</keyword>
<keyword id="KW-0963">Cytoplasm</keyword>
<keyword id="KW-0547">Nucleotide-binding</keyword>
<keyword id="KW-0539">Nucleus</keyword>
<keyword id="KW-0597">Phosphoprotein</keyword>
<keyword id="KW-1185">Reference proteome</keyword>
<keyword id="KW-0677">Repeat</keyword>
<organism>
    <name type="scientific">Sus scrofa</name>
    <name type="common">Pig</name>
    <dbReference type="NCBI Taxonomy" id="9823"/>
    <lineage>
        <taxon>Eukaryota</taxon>
        <taxon>Metazoa</taxon>
        <taxon>Chordata</taxon>
        <taxon>Craniata</taxon>
        <taxon>Vertebrata</taxon>
        <taxon>Euteleostomi</taxon>
        <taxon>Mammalia</taxon>
        <taxon>Eutheria</taxon>
        <taxon>Laurasiatheria</taxon>
        <taxon>Artiodactyla</taxon>
        <taxon>Suina</taxon>
        <taxon>Suidae</taxon>
        <taxon>Sus</taxon>
    </lineage>
</organism>